<gene>
    <name type="primary">hpcal1</name>
    <name type="ORF">TNeu142p12.1</name>
</gene>
<comment type="miscellaneous">
    <text evidence="1">Probably binds two or three calcium ions.</text>
</comment>
<comment type="similarity">
    <text evidence="4">Belongs to the recoverin family.</text>
</comment>
<reference key="1">
    <citation type="submission" date="2006-10" db="EMBL/GenBank/DDBJ databases">
        <authorList>
            <consortium name="Sanger Xenopus tropicalis EST/cDNA project"/>
        </authorList>
    </citation>
    <scope>NUCLEOTIDE SEQUENCE [LARGE SCALE MRNA]</scope>
    <source>
        <tissue>Neurula</tissue>
    </source>
</reference>
<feature type="initiator methionine" description="Removed" evidence="2">
    <location>
        <position position="1"/>
    </location>
</feature>
<feature type="chain" id="PRO_0000362079" description="Hippocalcin-like protein 1">
    <location>
        <begin position="2"/>
        <end position="193"/>
    </location>
</feature>
<feature type="domain" description="EF-hand 1" evidence="3">
    <location>
        <begin position="41"/>
        <end position="58"/>
    </location>
</feature>
<feature type="domain" description="EF-hand 2" evidence="3">
    <location>
        <begin position="60"/>
        <end position="95"/>
    </location>
</feature>
<feature type="domain" description="EF-hand 3" evidence="3">
    <location>
        <begin position="96"/>
        <end position="131"/>
    </location>
</feature>
<feature type="domain" description="EF-hand 4" evidence="3">
    <location>
        <begin position="144"/>
        <end position="179"/>
    </location>
</feature>
<feature type="binding site" evidence="3">
    <location>
        <position position="73"/>
    </location>
    <ligand>
        <name>Ca(2+)</name>
        <dbReference type="ChEBI" id="CHEBI:29108"/>
        <label>1</label>
    </ligand>
</feature>
<feature type="binding site" evidence="3">
    <location>
        <position position="75"/>
    </location>
    <ligand>
        <name>Ca(2+)</name>
        <dbReference type="ChEBI" id="CHEBI:29108"/>
        <label>1</label>
    </ligand>
</feature>
<feature type="binding site" evidence="3">
    <location>
        <position position="77"/>
    </location>
    <ligand>
        <name>Ca(2+)</name>
        <dbReference type="ChEBI" id="CHEBI:29108"/>
        <label>1</label>
    </ligand>
</feature>
<feature type="binding site" evidence="3">
    <location>
        <position position="79"/>
    </location>
    <ligand>
        <name>Ca(2+)</name>
        <dbReference type="ChEBI" id="CHEBI:29108"/>
        <label>1</label>
    </ligand>
</feature>
<feature type="binding site" evidence="3">
    <location>
        <position position="84"/>
    </location>
    <ligand>
        <name>Ca(2+)</name>
        <dbReference type="ChEBI" id="CHEBI:29108"/>
        <label>1</label>
    </ligand>
</feature>
<feature type="binding site" evidence="3">
    <location>
        <position position="109"/>
    </location>
    <ligand>
        <name>Ca(2+)</name>
        <dbReference type="ChEBI" id="CHEBI:29108"/>
        <label>2</label>
    </ligand>
</feature>
<feature type="binding site" evidence="3">
    <location>
        <position position="111"/>
    </location>
    <ligand>
        <name>Ca(2+)</name>
        <dbReference type="ChEBI" id="CHEBI:29108"/>
        <label>2</label>
    </ligand>
</feature>
<feature type="binding site" evidence="3">
    <location>
        <position position="113"/>
    </location>
    <ligand>
        <name>Ca(2+)</name>
        <dbReference type="ChEBI" id="CHEBI:29108"/>
        <label>2</label>
    </ligand>
</feature>
<feature type="binding site" evidence="3">
    <location>
        <position position="115"/>
    </location>
    <ligand>
        <name>Ca(2+)</name>
        <dbReference type="ChEBI" id="CHEBI:29108"/>
        <label>2</label>
    </ligand>
</feature>
<feature type="binding site" evidence="3">
    <location>
        <position position="120"/>
    </location>
    <ligand>
        <name>Ca(2+)</name>
        <dbReference type="ChEBI" id="CHEBI:29108"/>
        <label>2</label>
    </ligand>
</feature>
<feature type="binding site" evidence="3">
    <location>
        <position position="157"/>
    </location>
    <ligand>
        <name>Ca(2+)</name>
        <dbReference type="ChEBI" id="CHEBI:29108"/>
        <label>3</label>
    </ligand>
</feature>
<feature type="binding site" evidence="3">
    <location>
        <position position="159"/>
    </location>
    <ligand>
        <name>Ca(2+)</name>
        <dbReference type="ChEBI" id="CHEBI:29108"/>
        <label>3</label>
    </ligand>
</feature>
<feature type="binding site" evidence="3">
    <location>
        <position position="161"/>
    </location>
    <ligand>
        <name>Ca(2+)</name>
        <dbReference type="ChEBI" id="CHEBI:29108"/>
        <label>3</label>
    </ligand>
</feature>
<feature type="binding site" evidence="3">
    <location>
        <position position="163"/>
    </location>
    <ligand>
        <name>Ca(2+)</name>
        <dbReference type="ChEBI" id="CHEBI:29108"/>
        <label>3</label>
    </ligand>
</feature>
<feature type="binding site" evidence="3">
    <location>
        <position position="168"/>
    </location>
    <ligand>
        <name>Ca(2+)</name>
        <dbReference type="ChEBI" id="CHEBI:29108"/>
        <label>3</label>
    </ligand>
</feature>
<feature type="lipid moiety-binding region" description="N-myristoyl glycine" evidence="2">
    <location>
        <position position="2"/>
    </location>
</feature>
<evidence type="ECO:0000250" key="1"/>
<evidence type="ECO:0000255" key="2"/>
<evidence type="ECO:0000255" key="3">
    <source>
        <dbReference type="PROSITE-ProRule" id="PRU00448"/>
    </source>
</evidence>
<evidence type="ECO:0000305" key="4"/>
<sequence>MGKQNSKLRPEVLQDLRENTEFTDHELQEWYKGFLKDCPTGHLTVEEFKKIYANFFPYGDASKFAEHVFRTFDTNGDGTIDFREFIIALSVTSRGKLEQKLKWAFSMYDLDGNGYISRGEMLEIVQAIYKMVSSVMKMPEDESTPEKRTDKIFKQMDTNNDGKLSLEEFIKGAKSDPSIVRLLQCDPSSTSQF</sequence>
<keyword id="KW-0106">Calcium</keyword>
<keyword id="KW-0449">Lipoprotein</keyword>
<keyword id="KW-0479">Metal-binding</keyword>
<keyword id="KW-0519">Myristate</keyword>
<keyword id="KW-1185">Reference proteome</keyword>
<keyword id="KW-0677">Repeat</keyword>
<accession>Q28IM6</accession>
<proteinExistence type="evidence at transcript level"/>
<protein>
    <recommendedName>
        <fullName>Hippocalcin-like protein 1</fullName>
    </recommendedName>
</protein>
<dbReference type="EMBL" id="CR760317">
    <property type="protein sequence ID" value="CAJ82665.1"/>
    <property type="molecule type" value="mRNA"/>
</dbReference>
<dbReference type="RefSeq" id="NP_001037893.1">
    <property type="nucleotide sequence ID" value="NM_001044428.1"/>
</dbReference>
<dbReference type="SMR" id="Q28IM6"/>
<dbReference type="FunCoup" id="Q28IM6">
    <property type="interactions" value="866"/>
</dbReference>
<dbReference type="STRING" id="8364.ENSXETP00000027737"/>
<dbReference type="PaxDb" id="8364-ENSXETP00000007606"/>
<dbReference type="DNASU" id="733484"/>
<dbReference type="GeneID" id="733484"/>
<dbReference type="KEGG" id="xtr:733484"/>
<dbReference type="AGR" id="Xenbase:XB-GENE-947040"/>
<dbReference type="CTD" id="3241"/>
<dbReference type="Xenbase" id="XB-GENE-947040">
    <property type="gene designation" value="hpcal1"/>
</dbReference>
<dbReference type="eggNOG" id="KOG0044">
    <property type="taxonomic scope" value="Eukaryota"/>
</dbReference>
<dbReference type="HOGENOM" id="CLU_072366_1_0_1"/>
<dbReference type="InParanoid" id="Q28IM6"/>
<dbReference type="OrthoDB" id="191686at2759"/>
<dbReference type="TreeFam" id="TF300009"/>
<dbReference type="Proteomes" id="UP000008143">
    <property type="component" value="Chromosome 5"/>
</dbReference>
<dbReference type="GO" id="GO:0005509">
    <property type="term" value="F:calcium ion binding"/>
    <property type="evidence" value="ECO:0007669"/>
    <property type="project" value="InterPro"/>
</dbReference>
<dbReference type="CDD" id="cd00051">
    <property type="entry name" value="EFh"/>
    <property type="match status" value="2"/>
</dbReference>
<dbReference type="FunFam" id="1.10.238.10:FF:000078">
    <property type="entry name" value="Hippocalcin-like 1"/>
    <property type="match status" value="1"/>
</dbReference>
<dbReference type="FunFam" id="1.10.238.10:FF:000072">
    <property type="entry name" value="Hippocalcin-like protein 1"/>
    <property type="match status" value="1"/>
</dbReference>
<dbReference type="Gene3D" id="1.10.238.10">
    <property type="entry name" value="EF-hand"/>
    <property type="match status" value="2"/>
</dbReference>
<dbReference type="InterPro" id="IPR011992">
    <property type="entry name" value="EF-hand-dom_pair"/>
</dbReference>
<dbReference type="InterPro" id="IPR018247">
    <property type="entry name" value="EF_Hand_1_Ca_BS"/>
</dbReference>
<dbReference type="InterPro" id="IPR002048">
    <property type="entry name" value="EF_hand_dom"/>
</dbReference>
<dbReference type="InterPro" id="IPR028846">
    <property type="entry name" value="Recoverin"/>
</dbReference>
<dbReference type="PANTHER" id="PTHR23055">
    <property type="entry name" value="CALCIUM BINDING PROTEINS"/>
    <property type="match status" value="1"/>
</dbReference>
<dbReference type="PANTHER" id="PTHR23055:SF79">
    <property type="entry name" value="HIPPOCALCIN-LIKE PROTEIN 1"/>
    <property type="match status" value="1"/>
</dbReference>
<dbReference type="Pfam" id="PF13499">
    <property type="entry name" value="EF-hand_7"/>
    <property type="match status" value="2"/>
</dbReference>
<dbReference type="PRINTS" id="PR00450">
    <property type="entry name" value="RECOVERIN"/>
</dbReference>
<dbReference type="SMART" id="SM00054">
    <property type="entry name" value="EFh"/>
    <property type="match status" value="3"/>
</dbReference>
<dbReference type="SUPFAM" id="SSF47473">
    <property type="entry name" value="EF-hand"/>
    <property type="match status" value="1"/>
</dbReference>
<dbReference type="PROSITE" id="PS00018">
    <property type="entry name" value="EF_HAND_1"/>
    <property type="match status" value="3"/>
</dbReference>
<dbReference type="PROSITE" id="PS50222">
    <property type="entry name" value="EF_HAND_2"/>
    <property type="match status" value="4"/>
</dbReference>
<organism>
    <name type="scientific">Xenopus tropicalis</name>
    <name type="common">Western clawed frog</name>
    <name type="synonym">Silurana tropicalis</name>
    <dbReference type="NCBI Taxonomy" id="8364"/>
    <lineage>
        <taxon>Eukaryota</taxon>
        <taxon>Metazoa</taxon>
        <taxon>Chordata</taxon>
        <taxon>Craniata</taxon>
        <taxon>Vertebrata</taxon>
        <taxon>Euteleostomi</taxon>
        <taxon>Amphibia</taxon>
        <taxon>Batrachia</taxon>
        <taxon>Anura</taxon>
        <taxon>Pipoidea</taxon>
        <taxon>Pipidae</taxon>
        <taxon>Xenopodinae</taxon>
        <taxon>Xenopus</taxon>
        <taxon>Silurana</taxon>
    </lineage>
</organism>
<name>HPCL1_XENTR</name>